<gene>
    <name type="primary">9</name>
</gene>
<dbReference type="EMBL" id="AF157835">
    <property type="protein sequence ID" value="AAF03952.1"/>
    <property type="molecule type" value="Genomic_DNA"/>
</dbReference>
<dbReference type="RefSeq" id="NP_050970.1">
    <property type="nucleotide sequence ID" value="NC_000935.1"/>
</dbReference>
<dbReference type="KEGG" id="vg:1262303"/>
<dbReference type="Proteomes" id="UP000000853">
    <property type="component" value="Genome"/>
</dbReference>
<accession>Q9T1T9</accession>
<organism>
    <name type="scientific">Acyrthosiphon pisum secondary endosymbiont phage 1</name>
    <name type="common">Bacteriophage APSE-1</name>
    <dbReference type="NCBI Taxonomy" id="2682836"/>
    <lineage>
        <taxon>Viruses</taxon>
        <taxon>Duplodnaviria</taxon>
        <taxon>Heunggongvirae</taxon>
        <taxon>Uroviricota</taxon>
        <taxon>Caudoviricetes</taxon>
        <taxon>Sendosyvirus</taxon>
        <taxon>Sendosyvirus APSE1</taxon>
    </lineage>
</organism>
<protein>
    <recommendedName>
        <fullName>Putative protein p9</fullName>
    </recommendedName>
</protein>
<proteinExistence type="predicted"/>
<reference key="1">
    <citation type="journal article" date="1999" name="Virology">
        <title>Isolation and characterization of APSE-1, a bacteriophage infecting the secondary endosymbiont of acyrthosiphon pisum.</title>
        <authorList>
            <person name="van der Wilk F."/>
            <person name="Dullemans A.M."/>
            <person name="Verbeek M."/>
            <person name="van den Heuvel J.F.J.M."/>
        </authorList>
    </citation>
    <scope>NUCLEOTIDE SEQUENCE [LARGE SCALE GENOMIC DNA]</scope>
</reference>
<keyword id="KW-1185">Reference proteome</keyword>
<name>VP09_BPAPS</name>
<feature type="chain" id="PRO_0000077854" description="Putative protein p9">
    <location>
        <begin position="1"/>
        <end position="366"/>
    </location>
</feature>
<sequence>MLNIKCIPRKALVLVLGGGMILPNISPAMINDTAGCAGAGISYPYIAGANDNPLFISSDHRPTNNINQVMMMEIIRTINNQTTFQTVRAARHHIIPYQVLRDFYNAVITRGQSNPLELRTFGQILLHLVDNASRLYQNTISLSQLDDARSVALDFMHGVVLGDETRFSEQQVSGLYAIRTLFTWFPANIFIGPDTSYRFDDPGNGFEWNARSIVGAENFNRLEALHNLMVAYINKRNTLDHGWSVIMLARMVSMVSLFKALDNVVTISNAQNWFEPPDWYGDERVGIGFNGRVEYVDVQNLNPPENMRKKRENKNNFIVKRLPTIADPYCLMAPKIVKKKLVASLFTDINPDLNTNKEPKHDELRK</sequence>
<organismHost>
    <name type="scientific">Escherichia coli</name>
    <dbReference type="NCBI Taxonomy" id="562"/>
</organismHost>